<comment type="function">
    <text evidence="1">Accelerates the degradation of transcripts by removing pyrophosphate from the 5'-end of triphosphorylated RNA, leading to a more labile monophosphorylated state that can stimulate subsequent ribonuclease cleavage.</text>
</comment>
<comment type="cofactor">
    <cofactor evidence="1">
        <name>a divalent metal cation</name>
        <dbReference type="ChEBI" id="CHEBI:60240"/>
    </cofactor>
</comment>
<comment type="similarity">
    <text evidence="1">Belongs to the Nudix hydrolase family. RppH subfamily.</text>
</comment>
<evidence type="ECO:0000255" key="1">
    <source>
        <dbReference type="HAMAP-Rule" id="MF_00298"/>
    </source>
</evidence>
<accession>Q667F6</accession>
<name>RPPH_YERPS</name>
<dbReference type="EC" id="3.6.1.-" evidence="1"/>
<dbReference type="EMBL" id="BX936398">
    <property type="protein sequence ID" value="CAH22274.1"/>
    <property type="molecule type" value="Genomic_DNA"/>
</dbReference>
<dbReference type="RefSeq" id="WP_002211381.1">
    <property type="nucleotide sequence ID" value="NZ_CP009712.1"/>
</dbReference>
<dbReference type="SMR" id="Q667F6"/>
<dbReference type="GeneID" id="57973848"/>
<dbReference type="KEGG" id="ypo:BZ17_3581"/>
<dbReference type="KEGG" id="yps:YPTB3036"/>
<dbReference type="PATRIC" id="fig|273123.14.peg.3764"/>
<dbReference type="Proteomes" id="UP000001011">
    <property type="component" value="Chromosome"/>
</dbReference>
<dbReference type="GO" id="GO:0005737">
    <property type="term" value="C:cytoplasm"/>
    <property type="evidence" value="ECO:0007669"/>
    <property type="project" value="TreeGrafter"/>
</dbReference>
<dbReference type="GO" id="GO:0034353">
    <property type="term" value="F:mRNA 5'-diphosphatase activity"/>
    <property type="evidence" value="ECO:0007669"/>
    <property type="project" value="TreeGrafter"/>
</dbReference>
<dbReference type="GO" id="GO:0006402">
    <property type="term" value="P:mRNA catabolic process"/>
    <property type="evidence" value="ECO:0007669"/>
    <property type="project" value="TreeGrafter"/>
</dbReference>
<dbReference type="CDD" id="cd03671">
    <property type="entry name" value="NUDIX_Ap4A_hydrolase_plant_like"/>
    <property type="match status" value="1"/>
</dbReference>
<dbReference type="FunFam" id="3.90.79.10:FF:000001">
    <property type="entry name" value="RNA pyrophosphohydrolase"/>
    <property type="match status" value="1"/>
</dbReference>
<dbReference type="Gene3D" id="3.90.79.10">
    <property type="entry name" value="Nucleoside Triphosphate Pyrophosphohydrolase"/>
    <property type="match status" value="1"/>
</dbReference>
<dbReference type="HAMAP" id="MF_00298">
    <property type="entry name" value="Nudix_RppH"/>
    <property type="match status" value="1"/>
</dbReference>
<dbReference type="InterPro" id="IPR020476">
    <property type="entry name" value="Nudix_hydrolase"/>
</dbReference>
<dbReference type="InterPro" id="IPR015797">
    <property type="entry name" value="NUDIX_hydrolase-like_dom_sf"/>
</dbReference>
<dbReference type="InterPro" id="IPR020084">
    <property type="entry name" value="NUDIX_hydrolase_CS"/>
</dbReference>
<dbReference type="InterPro" id="IPR000086">
    <property type="entry name" value="NUDIX_hydrolase_dom"/>
</dbReference>
<dbReference type="InterPro" id="IPR022927">
    <property type="entry name" value="RppH"/>
</dbReference>
<dbReference type="NCBIfam" id="NF001934">
    <property type="entry name" value="PRK00714.1-1"/>
    <property type="match status" value="1"/>
</dbReference>
<dbReference type="NCBIfam" id="NF001937">
    <property type="entry name" value="PRK00714.1-4"/>
    <property type="match status" value="1"/>
</dbReference>
<dbReference type="NCBIfam" id="NF001938">
    <property type="entry name" value="PRK00714.1-5"/>
    <property type="match status" value="1"/>
</dbReference>
<dbReference type="PANTHER" id="PTHR23114">
    <property type="entry name" value="M7GPPPN-MRNA HYDROLASE"/>
    <property type="match status" value="1"/>
</dbReference>
<dbReference type="PANTHER" id="PTHR23114:SF17">
    <property type="entry name" value="M7GPPPN-MRNA HYDROLASE"/>
    <property type="match status" value="1"/>
</dbReference>
<dbReference type="Pfam" id="PF00293">
    <property type="entry name" value="NUDIX"/>
    <property type="match status" value="1"/>
</dbReference>
<dbReference type="PRINTS" id="PR00502">
    <property type="entry name" value="NUDIXFAMILY"/>
</dbReference>
<dbReference type="SUPFAM" id="SSF55811">
    <property type="entry name" value="Nudix"/>
    <property type="match status" value="1"/>
</dbReference>
<dbReference type="PROSITE" id="PS51462">
    <property type="entry name" value="NUDIX"/>
    <property type="match status" value="1"/>
</dbReference>
<dbReference type="PROSITE" id="PS00893">
    <property type="entry name" value="NUDIX_BOX"/>
    <property type="match status" value="1"/>
</dbReference>
<sequence>MIDDDGYRPNVGIVICNRQGEVLWARRYGQHSWQFPQGGINPGETPEQAMYRELFEEVGLNKKDVRILASTRNWLRYKLPKRLVRWDTKPVCIGQKQRWFLLQLMCNEAEINMQRSSTPEFDGWRWVSYWYPVRQVVSFKRDVYRRVMKEFAATVMPVQEVAPPRVPPAYRRKRG</sequence>
<feature type="chain" id="PRO_0000231948" description="RNA pyrophosphohydrolase">
    <location>
        <begin position="1"/>
        <end position="175"/>
    </location>
</feature>
<feature type="domain" description="Nudix hydrolase" evidence="1">
    <location>
        <begin position="6"/>
        <end position="149"/>
    </location>
</feature>
<feature type="short sequence motif" description="Nudix box">
    <location>
        <begin position="38"/>
        <end position="59"/>
    </location>
</feature>
<keyword id="KW-0378">Hydrolase</keyword>
<proteinExistence type="inferred from homology"/>
<protein>
    <recommendedName>
        <fullName evidence="1">RNA pyrophosphohydrolase</fullName>
        <ecNumber evidence="1">3.6.1.-</ecNumber>
    </recommendedName>
    <alternativeName>
        <fullName evidence="1">(Di)nucleoside polyphosphate hydrolase</fullName>
    </alternativeName>
</protein>
<organism>
    <name type="scientific">Yersinia pseudotuberculosis serotype I (strain IP32953)</name>
    <dbReference type="NCBI Taxonomy" id="273123"/>
    <lineage>
        <taxon>Bacteria</taxon>
        <taxon>Pseudomonadati</taxon>
        <taxon>Pseudomonadota</taxon>
        <taxon>Gammaproteobacteria</taxon>
        <taxon>Enterobacterales</taxon>
        <taxon>Yersiniaceae</taxon>
        <taxon>Yersinia</taxon>
    </lineage>
</organism>
<gene>
    <name evidence="1" type="primary">rppH</name>
    <name evidence="1" type="synonym">nudH</name>
    <name type="ordered locus">YPTB3036</name>
</gene>
<reference key="1">
    <citation type="journal article" date="2004" name="Proc. Natl. Acad. Sci. U.S.A.">
        <title>Insights into the evolution of Yersinia pestis through whole-genome comparison with Yersinia pseudotuberculosis.</title>
        <authorList>
            <person name="Chain P.S.G."/>
            <person name="Carniel E."/>
            <person name="Larimer F.W."/>
            <person name="Lamerdin J."/>
            <person name="Stoutland P.O."/>
            <person name="Regala W.M."/>
            <person name="Georgescu A.M."/>
            <person name="Vergez L.M."/>
            <person name="Land M.L."/>
            <person name="Motin V.L."/>
            <person name="Brubaker R.R."/>
            <person name="Fowler J."/>
            <person name="Hinnebusch J."/>
            <person name="Marceau M."/>
            <person name="Medigue C."/>
            <person name="Simonet M."/>
            <person name="Chenal-Francisque V."/>
            <person name="Souza B."/>
            <person name="Dacheux D."/>
            <person name="Elliott J.M."/>
            <person name="Derbise A."/>
            <person name="Hauser L.J."/>
            <person name="Garcia E."/>
        </authorList>
    </citation>
    <scope>NUCLEOTIDE SEQUENCE [LARGE SCALE GENOMIC DNA]</scope>
    <source>
        <strain>IP32953</strain>
    </source>
</reference>